<evidence type="ECO:0000250" key="1"/>
<evidence type="ECO:0000250" key="2">
    <source>
        <dbReference type="UniProtKB" id="Q2G1E0"/>
    </source>
</evidence>
<evidence type="ECO:0000255" key="3"/>
<evidence type="ECO:0000305" key="4"/>
<gene>
    <name type="primary">hptS</name>
    <name type="ordered locus">SAV0224</name>
</gene>
<comment type="function">
    <text evidence="2">Member of the two-component regulatory system HptS/HptR that regulates genes involved in hexose phosphate transport system in response to changes in extracellular phosphate sources. May act as a sensor protein kinase which is autophosphorylated at a histidine residue and transfers its phosphate group to the conserved aspartic acid residue in the regulatory domain of HptS. In turn, HptS antagonizes CcpA-dependent transcription of a subset of CcpA-regulated genes involved in antibiotic susceptibility.</text>
</comment>
<comment type="catalytic activity">
    <reaction>
        <text>ATP + protein L-histidine = ADP + protein N-phospho-L-histidine.</text>
        <dbReference type="EC" id="2.7.13.3"/>
    </reaction>
</comment>
<comment type="subcellular location">
    <subcellularLocation>
        <location evidence="4">Cell membrane</location>
        <topology evidence="4">Multi-pass membrane protein</topology>
    </subcellularLocation>
</comment>
<comment type="PTM">
    <text evidence="1">Autophosphorylated.</text>
</comment>
<dbReference type="EC" id="2.7.13.3"/>
<dbReference type="EMBL" id="BA000017">
    <property type="protein sequence ID" value="BAB56386.1"/>
    <property type="molecule type" value="Genomic_DNA"/>
</dbReference>
<dbReference type="RefSeq" id="WP_000127990.1">
    <property type="nucleotide sequence ID" value="NC_002758.2"/>
</dbReference>
<dbReference type="SMR" id="Q99WZ9"/>
<dbReference type="KEGG" id="sav:SAV0224"/>
<dbReference type="HOGENOM" id="CLU_525720_0_0_9"/>
<dbReference type="PhylomeDB" id="Q99WZ9"/>
<dbReference type="Proteomes" id="UP000002481">
    <property type="component" value="Chromosome"/>
</dbReference>
<dbReference type="GO" id="GO:0005886">
    <property type="term" value="C:plasma membrane"/>
    <property type="evidence" value="ECO:0007669"/>
    <property type="project" value="UniProtKB-SubCell"/>
</dbReference>
<dbReference type="GO" id="GO:0005524">
    <property type="term" value="F:ATP binding"/>
    <property type="evidence" value="ECO:0007669"/>
    <property type="project" value="UniProtKB-KW"/>
</dbReference>
<dbReference type="GO" id="GO:0000155">
    <property type="term" value="F:phosphorelay sensor kinase activity"/>
    <property type="evidence" value="ECO:0007669"/>
    <property type="project" value="InterPro"/>
</dbReference>
<dbReference type="Gene3D" id="3.30.565.10">
    <property type="entry name" value="Histidine kinase-like ATPase, C-terminal domain"/>
    <property type="match status" value="1"/>
</dbReference>
<dbReference type="InterPro" id="IPR050640">
    <property type="entry name" value="Bact_2-comp_sensor_kinase"/>
</dbReference>
<dbReference type="InterPro" id="IPR036890">
    <property type="entry name" value="HATPase_C_sf"/>
</dbReference>
<dbReference type="InterPro" id="IPR010559">
    <property type="entry name" value="Sig_transdc_His_kin_internal"/>
</dbReference>
<dbReference type="PANTHER" id="PTHR34220">
    <property type="entry name" value="SENSOR HISTIDINE KINASE YPDA"/>
    <property type="match status" value="1"/>
</dbReference>
<dbReference type="PANTHER" id="PTHR34220:SF11">
    <property type="entry name" value="SENSOR PROTEIN KINASE HPTS"/>
    <property type="match status" value="1"/>
</dbReference>
<dbReference type="Pfam" id="PF02518">
    <property type="entry name" value="HATPase_c"/>
    <property type="match status" value="1"/>
</dbReference>
<dbReference type="Pfam" id="PF06580">
    <property type="entry name" value="His_kinase"/>
    <property type="match status" value="1"/>
</dbReference>
<dbReference type="SUPFAM" id="SSF55874">
    <property type="entry name" value="ATPase domain of HSP90 chaperone/DNA topoisomerase II/histidine kinase"/>
    <property type="match status" value="1"/>
</dbReference>
<feature type="chain" id="PRO_0000299123" description="Sensor protein kinase HptS">
    <location>
        <begin position="1"/>
        <end position="518"/>
    </location>
</feature>
<feature type="transmembrane region" description="Helical" evidence="3">
    <location>
        <begin position="20"/>
        <end position="40"/>
    </location>
</feature>
<feature type="transmembrane region" description="Helical" evidence="3">
    <location>
        <begin position="222"/>
        <end position="242"/>
    </location>
</feature>
<feature type="domain" description="Histidine kinase">
    <location>
        <begin position="297"/>
        <end position="513"/>
    </location>
</feature>
<feature type="modified residue" description="Phosphohistidine; by autocatalysis" evidence="1">
    <location>
        <position position="325"/>
    </location>
</feature>
<name>HPTS_STAAM</name>
<accession>Q99WZ9</accession>
<keyword id="KW-0067">ATP-binding</keyword>
<keyword id="KW-1003">Cell membrane</keyword>
<keyword id="KW-0418">Kinase</keyword>
<keyword id="KW-0472">Membrane</keyword>
<keyword id="KW-0547">Nucleotide-binding</keyword>
<keyword id="KW-0597">Phosphoprotein</keyword>
<keyword id="KW-0808">Transferase</keyword>
<keyword id="KW-0812">Transmembrane</keyword>
<keyword id="KW-1133">Transmembrane helix</keyword>
<keyword id="KW-0902">Two-component regulatory system</keyword>
<sequence length="518" mass="61006">MTAYKPYRHQLRRSLFASTIFPVFLVIIIGLVSFYAIYIWIEHRTIHQHVDESQSSLHHTEKQIQTFITQHNNSFQELDLTNHHDVTATKRELLKLIHQQPATLYYELSGPNQFITNNYEHLNTKNMYLFSTHQLKFNNSTYMLKIYMANTPRLSEIKKDSRQFALIVDQYDNILYANDDRFTIGEKYRPQQFGFMNESVKLNHADHRLIIYKDIHENIEDGITLLIVMAVVLVLLVIFGFISADNMAKRQTKDIETIIQKIYYAKNRHLGTYTPLKNNSELEEINNYIYDLFESNEQLIHSIEHTERRLRDIQLKEIERQFQPHFLFNTMQTIQYLITLSPKLAQTVVQQLSQMLRYSLRTNSHTVELNEELNYIEQYVAIQNIRFDDMIKLHIESSEEARHQTIGKMMLQPLIENAIKHGRDTESLDITIRLTLARQNLHVLVCDNGIGMSSSRLQYVRQSLNNDVFDTKHLGLNHLHNKAMIQYGSHARLHIFSKRNQGTLICYKIPLSRGNVDV</sequence>
<reference key="1">
    <citation type="journal article" date="2001" name="Lancet">
        <title>Whole genome sequencing of meticillin-resistant Staphylococcus aureus.</title>
        <authorList>
            <person name="Kuroda M."/>
            <person name="Ohta T."/>
            <person name="Uchiyama I."/>
            <person name="Baba T."/>
            <person name="Yuzawa H."/>
            <person name="Kobayashi I."/>
            <person name="Cui L."/>
            <person name="Oguchi A."/>
            <person name="Aoki K."/>
            <person name="Nagai Y."/>
            <person name="Lian J.-Q."/>
            <person name="Ito T."/>
            <person name="Kanamori M."/>
            <person name="Matsumaru H."/>
            <person name="Maruyama A."/>
            <person name="Murakami H."/>
            <person name="Hosoyama A."/>
            <person name="Mizutani-Ui Y."/>
            <person name="Takahashi N.K."/>
            <person name="Sawano T."/>
            <person name="Inoue R."/>
            <person name="Kaito C."/>
            <person name="Sekimizu K."/>
            <person name="Hirakawa H."/>
            <person name="Kuhara S."/>
            <person name="Goto S."/>
            <person name="Yabuzaki J."/>
            <person name="Kanehisa M."/>
            <person name="Yamashita A."/>
            <person name="Oshima K."/>
            <person name="Furuya K."/>
            <person name="Yoshino C."/>
            <person name="Shiba T."/>
            <person name="Hattori M."/>
            <person name="Ogasawara N."/>
            <person name="Hayashi H."/>
            <person name="Hiramatsu K."/>
        </authorList>
    </citation>
    <scope>NUCLEOTIDE SEQUENCE [LARGE SCALE GENOMIC DNA]</scope>
    <source>
        <strain>Mu50 / ATCC 700699</strain>
    </source>
</reference>
<proteinExistence type="inferred from homology"/>
<organism>
    <name type="scientific">Staphylococcus aureus (strain Mu50 / ATCC 700699)</name>
    <dbReference type="NCBI Taxonomy" id="158878"/>
    <lineage>
        <taxon>Bacteria</taxon>
        <taxon>Bacillati</taxon>
        <taxon>Bacillota</taxon>
        <taxon>Bacilli</taxon>
        <taxon>Bacillales</taxon>
        <taxon>Staphylococcaceae</taxon>
        <taxon>Staphylococcus</taxon>
    </lineage>
</organism>
<protein>
    <recommendedName>
        <fullName>Sensor protein kinase HptS</fullName>
        <ecNumber>2.7.13.3</ecNumber>
    </recommendedName>
</protein>